<protein>
    <recommendedName>
        <fullName evidence="1">Cytidylate kinase</fullName>
        <shortName evidence="1">CK</shortName>
        <ecNumber evidence="1">2.7.4.25</ecNumber>
    </recommendedName>
    <alternativeName>
        <fullName evidence="1">Cytidine monophosphate kinase</fullName>
        <shortName evidence="1">CMP kinase</shortName>
    </alternativeName>
</protein>
<accession>A6WNM9</accession>
<sequence length="230" mass="25093">MSERAPVVTIDGPSGAGKGTISQLLAQHLGWQLLDSGAIYRVLALAAIHHNVELENEESITLLAAHLDVKFLTGNDTDPVQVILEGEDVTTDIRTQECSNAASKVAAFPRVREALLRRQRAFKTAPGLIADGRDMGTVVFPSAPAKLYLTASAEERAQRRYNQLQDKGFDVNIERLLSEIIERDDRDMNRPVAPLVPAEDALIIDTSGKGIDEVLALALNFINQKLSDTN</sequence>
<gene>
    <name evidence="1" type="primary">cmk</name>
    <name type="ordered locus">Shew185_2280</name>
</gene>
<evidence type="ECO:0000255" key="1">
    <source>
        <dbReference type="HAMAP-Rule" id="MF_00238"/>
    </source>
</evidence>
<dbReference type="EC" id="2.7.4.25" evidence="1"/>
<dbReference type="EMBL" id="CP000753">
    <property type="protein sequence ID" value="ABS08418.1"/>
    <property type="molecule type" value="Genomic_DNA"/>
</dbReference>
<dbReference type="RefSeq" id="WP_006081720.1">
    <property type="nucleotide sequence ID" value="NC_009665.1"/>
</dbReference>
<dbReference type="SMR" id="A6WNM9"/>
<dbReference type="GeneID" id="11772514"/>
<dbReference type="KEGG" id="sbm:Shew185_2280"/>
<dbReference type="HOGENOM" id="CLU_079959_2_0_6"/>
<dbReference type="GO" id="GO:0005829">
    <property type="term" value="C:cytosol"/>
    <property type="evidence" value="ECO:0007669"/>
    <property type="project" value="TreeGrafter"/>
</dbReference>
<dbReference type="GO" id="GO:0005524">
    <property type="term" value="F:ATP binding"/>
    <property type="evidence" value="ECO:0007669"/>
    <property type="project" value="UniProtKB-UniRule"/>
</dbReference>
<dbReference type="GO" id="GO:0036430">
    <property type="term" value="F:CMP kinase activity"/>
    <property type="evidence" value="ECO:0007669"/>
    <property type="project" value="RHEA"/>
</dbReference>
<dbReference type="GO" id="GO:0036431">
    <property type="term" value="F:dCMP kinase activity"/>
    <property type="evidence" value="ECO:0007669"/>
    <property type="project" value="RHEA"/>
</dbReference>
<dbReference type="GO" id="GO:0015949">
    <property type="term" value="P:nucleobase-containing small molecule interconversion"/>
    <property type="evidence" value="ECO:0007669"/>
    <property type="project" value="TreeGrafter"/>
</dbReference>
<dbReference type="GO" id="GO:0006220">
    <property type="term" value="P:pyrimidine nucleotide metabolic process"/>
    <property type="evidence" value="ECO:0007669"/>
    <property type="project" value="UniProtKB-UniRule"/>
</dbReference>
<dbReference type="CDD" id="cd02020">
    <property type="entry name" value="CMPK"/>
    <property type="match status" value="1"/>
</dbReference>
<dbReference type="FunFam" id="3.40.50.300:FF:000262">
    <property type="entry name" value="Cytidylate kinase"/>
    <property type="match status" value="1"/>
</dbReference>
<dbReference type="Gene3D" id="3.40.50.300">
    <property type="entry name" value="P-loop containing nucleotide triphosphate hydrolases"/>
    <property type="match status" value="1"/>
</dbReference>
<dbReference type="HAMAP" id="MF_00238">
    <property type="entry name" value="Cytidyl_kinase_type1"/>
    <property type="match status" value="1"/>
</dbReference>
<dbReference type="InterPro" id="IPR003136">
    <property type="entry name" value="Cytidylate_kin"/>
</dbReference>
<dbReference type="InterPro" id="IPR011994">
    <property type="entry name" value="Cytidylate_kinase_dom"/>
</dbReference>
<dbReference type="InterPro" id="IPR027417">
    <property type="entry name" value="P-loop_NTPase"/>
</dbReference>
<dbReference type="NCBIfam" id="TIGR00017">
    <property type="entry name" value="cmk"/>
    <property type="match status" value="1"/>
</dbReference>
<dbReference type="PANTHER" id="PTHR21299:SF2">
    <property type="entry name" value="CYTIDYLATE KINASE"/>
    <property type="match status" value="1"/>
</dbReference>
<dbReference type="PANTHER" id="PTHR21299">
    <property type="entry name" value="CYTIDYLATE KINASE/PANTOATE-BETA-ALANINE LIGASE"/>
    <property type="match status" value="1"/>
</dbReference>
<dbReference type="Pfam" id="PF02224">
    <property type="entry name" value="Cytidylate_kin"/>
    <property type="match status" value="1"/>
</dbReference>
<dbReference type="SUPFAM" id="SSF52540">
    <property type="entry name" value="P-loop containing nucleoside triphosphate hydrolases"/>
    <property type="match status" value="1"/>
</dbReference>
<organism>
    <name type="scientific">Shewanella baltica (strain OS185)</name>
    <dbReference type="NCBI Taxonomy" id="402882"/>
    <lineage>
        <taxon>Bacteria</taxon>
        <taxon>Pseudomonadati</taxon>
        <taxon>Pseudomonadota</taxon>
        <taxon>Gammaproteobacteria</taxon>
        <taxon>Alteromonadales</taxon>
        <taxon>Shewanellaceae</taxon>
        <taxon>Shewanella</taxon>
    </lineage>
</organism>
<name>KCY_SHEB8</name>
<proteinExistence type="inferred from homology"/>
<feature type="chain" id="PRO_1000048273" description="Cytidylate kinase">
    <location>
        <begin position="1"/>
        <end position="230"/>
    </location>
</feature>
<feature type="binding site" evidence="1">
    <location>
        <begin position="12"/>
        <end position="20"/>
    </location>
    <ligand>
        <name>ATP</name>
        <dbReference type="ChEBI" id="CHEBI:30616"/>
    </ligand>
</feature>
<comment type="catalytic activity">
    <reaction evidence="1">
        <text>CMP + ATP = CDP + ADP</text>
        <dbReference type="Rhea" id="RHEA:11600"/>
        <dbReference type="ChEBI" id="CHEBI:30616"/>
        <dbReference type="ChEBI" id="CHEBI:58069"/>
        <dbReference type="ChEBI" id="CHEBI:60377"/>
        <dbReference type="ChEBI" id="CHEBI:456216"/>
        <dbReference type="EC" id="2.7.4.25"/>
    </reaction>
</comment>
<comment type="catalytic activity">
    <reaction evidence="1">
        <text>dCMP + ATP = dCDP + ADP</text>
        <dbReference type="Rhea" id="RHEA:25094"/>
        <dbReference type="ChEBI" id="CHEBI:30616"/>
        <dbReference type="ChEBI" id="CHEBI:57566"/>
        <dbReference type="ChEBI" id="CHEBI:58593"/>
        <dbReference type="ChEBI" id="CHEBI:456216"/>
        <dbReference type="EC" id="2.7.4.25"/>
    </reaction>
</comment>
<comment type="subcellular location">
    <subcellularLocation>
        <location evidence="1">Cytoplasm</location>
    </subcellularLocation>
</comment>
<comment type="similarity">
    <text evidence="1">Belongs to the cytidylate kinase family. Type 1 subfamily.</text>
</comment>
<reference key="1">
    <citation type="submission" date="2007-07" db="EMBL/GenBank/DDBJ databases">
        <title>Complete sequence of chromosome of Shewanella baltica OS185.</title>
        <authorList>
            <consortium name="US DOE Joint Genome Institute"/>
            <person name="Copeland A."/>
            <person name="Lucas S."/>
            <person name="Lapidus A."/>
            <person name="Barry K."/>
            <person name="Glavina del Rio T."/>
            <person name="Dalin E."/>
            <person name="Tice H."/>
            <person name="Pitluck S."/>
            <person name="Sims D."/>
            <person name="Brettin T."/>
            <person name="Bruce D."/>
            <person name="Detter J.C."/>
            <person name="Han C."/>
            <person name="Schmutz J."/>
            <person name="Larimer F."/>
            <person name="Land M."/>
            <person name="Hauser L."/>
            <person name="Kyrpides N."/>
            <person name="Mikhailova N."/>
            <person name="Brettar I."/>
            <person name="Rodrigues J."/>
            <person name="Konstantinidis K."/>
            <person name="Tiedje J."/>
            <person name="Richardson P."/>
        </authorList>
    </citation>
    <scope>NUCLEOTIDE SEQUENCE [LARGE SCALE GENOMIC DNA]</scope>
    <source>
        <strain>OS185</strain>
    </source>
</reference>
<keyword id="KW-0067">ATP-binding</keyword>
<keyword id="KW-0963">Cytoplasm</keyword>
<keyword id="KW-0418">Kinase</keyword>
<keyword id="KW-0547">Nucleotide-binding</keyword>
<keyword id="KW-0808">Transferase</keyword>